<reference key="1">
    <citation type="journal article" date="2002" name="Nature">
        <title>The genome sequence of Schizosaccharomyces pombe.</title>
        <authorList>
            <person name="Wood V."/>
            <person name="Gwilliam R."/>
            <person name="Rajandream M.A."/>
            <person name="Lyne M.H."/>
            <person name="Lyne R."/>
            <person name="Stewart A."/>
            <person name="Sgouros J.G."/>
            <person name="Peat N."/>
            <person name="Hayles J."/>
            <person name="Baker S.G."/>
            <person name="Basham D."/>
            <person name="Bowman S."/>
            <person name="Brooks K."/>
            <person name="Brown D."/>
            <person name="Brown S."/>
            <person name="Chillingworth T."/>
            <person name="Churcher C.M."/>
            <person name="Collins M."/>
            <person name="Connor R."/>
            <person name="Cronin A."/>
            <person name="Davis P."/>
            <person name="Feltwell T."/>
            <person name="Fraser A."/>
            <person name="Gentles S."/>
            <person name="Goble A."/>
            <person name="Hamlin N."/>
            <person name="Harris D.E."/>
            <person name="Hidalgo J."/>
            <person name="Hodgson G."/>
            <person name="Holroyd S."/>
            <person name="Hornsby T."/>
            <person name="Howarth S."/>
            <person name="Huckle E.J."/>
            <person name="Hunt S."/>
            <person name="Jagels K."/>
            <person name="James K.D."/>
            <person name="Jones L."/>
            <person name="Jones M."/>
            <person name="Leather S."/>
            <person name="McDonald S."/>
            <person name="McLean J."/>
            <person name="Mooney P."/>
            <person name="Moule S."/>
            <person name="Mungall K.L."/>
            <person name="Murphy L.D."/>
            <person name="Niblett D."/>
            <person name="Odell C."/>
            <person name="Oliver K."/>
            <person name="O'Neil S."/>
            <person name="Pearson D."/>
            <person name="Quail M.A."/>
            <person name="Rabbinowitsch E."/>
            <person name="Rutherford K.M."/>
            <person name="Rutter S."/>
            <person name="Saunders D."/>
            <person name="Seeger K."/>
            <person name="Sharp S."/>
            <person name="Skelton J."/>
            <person name="Simmonds M.N."/>
            <person name="Squares R."/>
            <person name="Squares S."/>
            <person name="Stevens K."/>
            <person name="Taylor K."/>
            <person name="Taylor R.G."/>
            <person name="Tivey A."/>
            <person name="Walsh S.V."/>
            <person name="Warren T."/>
            <person name="Whitehead S."/>
            <person name="Woodward J.R."/>
            <person name="Volckaert G."/>
            <person name="Aert R."/>
            <person name="Robben J."/>
            <person name="Grymonprez B."/>
            <person name="Weltjens I."/>
            <person name="Vanstreels E."/>
            <person name="Rieger M."/>
            <person name="Schaefer M."/>
            <person name="Mueller-Auer S."/>
            <person name="Gabel C."/>
            <person name="Fuchs M."/>
            <person name="Duesterhoeft A."/>
            <person name="Fritzc C."/>
            <person name="Holzer E."/>
            <person name="Moestl D."/>
            <person name="Hilbert H."/>
            <person name="Borzym K."/>
            <person name="Langer I."/>
            <person name="Beck A."/>
            <person name="Lehrach H."/>
            <person name="Reinhardt R."/>
            <person name="Pohl T.M."/>
            <person name="Eger P."/>
            <person name="Zimmermann W."/>
            <person name="Wedler H."/>
            <person name="Wambutt R."/>
            <person name="Purnelle B."/>
            <person name="Goffeau A."/>
            <person name="Cadieu E."/>
            <person name="Dreano S."/>
            <person name="Gloux S."/>
            <person name="Lelaure V."/>
            <person name="Mottier S."/>
            <person name="Galibert F."/>
            <person name="Aves S.J."/>
            <person name="Xiang Z."/>
            <person name="Hunt C."/>
            <person name="Moore K."/>
            <person name="Hurst S.M."/>
            <person name="Lucas M."/>
            <person name="Rochet M."/>
            <person name="Gaillardin C."/>
            <person name="Tallada V.A."/>
            <person name="Garzon A."/>
            <person name="Thode G."/>
            <person name="Daga R.R."/>
            <person name="Cruzado L."/>
            <person name="Jimenez J."/>
            <person name="Sanchez M."/>
            <person name="del Rey F."/>
            <person name="Benito J."/>
            <person name="Dominguez A."/>
            <person name="Revuelta J.L."/>
            <person name="Moreno S."/>
            <person name="Armstrong J."/>
            <person name="Forsburg S.L."/>
            <person name="Cerutti L."/>
            <person name="Lowe T."/>
            <person name="McCombie W.R."/>
            <person name="Paulsen I."/>
            <person name="Potashkin J."/>
            <person name="Shpakovski G.V."/>
            <person name="Ussery D."/>
            <person name="Barrell B.G."/>
            <person name="Nurse P."/>
        </authorList>
    </citation>
    <scope>NUCLEOTIDE SEQUENCE [LARGE SCALE GENOMIC DNA]</scope>
    <source>
        <strain>972 / ATCC 24843</strain>
    </source>
</reference>
<organism>
    <name type="scientific">Schizosaccharomyces pombe (strain 972 / ATCC 24843)</name>
    <name type="common">Fission yeast</name>
    <dbReference type="NCBI Taxonomy" id="284812"/>
    <lineage>
        <taxon>Eukaryota</taxon>
        <taxon>Fungi</taxon>
        <taxon>Dikarya</taxon>
        <taxon>Ascomycota</taxon>
        <taxon>Taphrinomycotina</taxon>
        <taxon>Schizosaccharomycetes</taxon>
        <taxon>Schizosaccharomycetales</taxon>
        <taxon>Schizosaccharomycetaceae</taxon>
        <taxon>Schizosaccharomyces</taxon>
    </lineage>
</organism>
<proteinExistence type="inferred from homology"/>
<dbReference type="EMBL" id="CU329672">
    <property type="protein sequence ID" value="CAA18312.1"/>
    <property type="molecule type" value="Genomic_DNA"/>
</dbReference>
<dbReference type="PIR" id="T41301">
    <property type="entry name" value="T41301"/>
</dbReference>
<dbReference type="RefSeq" id="NP_587719.1">
    <property type="nucleotide sequence ID" value="NM_001022714.2"/>
</dbReference>
<dbReference type="SMR" id="O59787"/>
<dbReference type="BioGRID" id="275372">
    <property type="interactions" value="2"/>
</dbReference>
<dbReference type="FunCoup" id="O59787">
    <property type="interactions" value="482"/>
</dbReference>
<dbReference type="STRING" id="284812.O59787"/>
<dbReference type="iPTMnet" id="O59787"/>
<dbReference type="PaxDb" id="4896-SPCC320.10.1"/>
<dbReference type="EnsemblFungi" id="SPCC320.10.1">
    <property type="protein sequence ID" value="SPCC320.10.1:pep"/>
    <property type="gene ID" value="SPCC320.10"/>
</dbReference>
<dbReference type="GeneID" id="2538791"/>
<dbReference type="KEGG" id="spo:2538791"/>
<dbReference type="PomBase" id="SPCC320.10">
    <property type="gene designation" value="srp72"/>
</dbReference>
<dbReference type="VEuPathDB" id="FungiDB:SPCC320.10"/>
<dbReference type="eggNOG" id="KOG2376">
    <property type="taxonomic scope" value="Eukaryota"/>
</dbReference>
<dbReference type="HOGENOM" id="CLU_013808_1_0_1"/>
<dbReference type="InParanoid" id="O59787"/>
<dbReference type="OMA" id="NDMKVLA"/>
<dbReference type="PhylomeDB" id="O59787"/>
<dbReference type="Reactome" id="R-SPO-1799339">
    <property type="pathway name" value="SRP-dependent cotranslational protein targeting to membrane"/>
</dbReference>
<dbReference type="PRO" id="PR:O59787"/>
<dbReference type="Proteomes" id="UP000002485">
    <property type="component" value="Chromosome III"/>
</dbReference>
<dbReference type="GO" id="GO:0005829">
    <property type="term" value="C:cytosol"/>
    <property type="evidence" value="ECO:0007005"/>
    <property type="project" value="PomBase"/>
</dbReference>
<dbReference type="GO" id="GO:0005789">
    <property type="term" value="C:endoplasmic reticulum membrane"/>
    <property type="evidence" value="ECO:0007669"/>
    <property type="project" value="UniProtKB-SubCell"/>
</dbReference>
<dbReference type="GO" id="GO:0005730">
    <property type="term" value="C:nucleolus"/>
    <property type="evidence" value="ECO:0007669"/>
    <property type="project" value="UniProtKB-SubCell"/>
</dbReference>
<dbReference type="GO" id="GO:0005634">
    <property type="term" value="C:nucleus"/>
    <property type="evidence" value="ECO:0007005"/>
    <property type="project" value="PomBase"/>
</dbReference>
<dbReference type="GO" id="GO:0005786">
    <property type="term" value="C:signal recognition particle, endoplasmic reticulum targeting"/>
    <property type="evidence" value="ECO:0000318"/>
    <property type="project" value="GO_Central"/>
</dbReference>
<dbReference type="GO" id="GO:0008312">
    <property type="term" value="F:7S RNA binding"/>
    <property type="evidence" value="ECO:0000318"/>
    <property type="project" value="GO_Central"/>
</dbReference>
<dbReference type="GO" id="GO:0006614">
    <property type="term" value="P:SRP-dependent cotranslational protein targeting to membrane"/>
    <property type="evidence" value="ECO:0000318"/>
    <property type="project" value="GO_Central"/>
</dbReference>
<dbReference type="Gene3D" id="1.25.40.10">
    <property type="entry name" value="Tetratricopeptide repeat domain"/>
    <property type="match status" value="1"/>
</dbReference>
<dbReference type="InterPro" id="IPR013699">
    <property type="entry name" value="Signal_recog_part_SRP72_RNA-bd"/>
</dbReference>
<dbReference type="InterPro" id="IPR026270">
    <property type="entry name" value="SRP72"/>
</dbReference>
<dbReference type="InterPro" id="IPR011990">
    <property type="entry name" value="TPR-like_helical_dom_sf"/>
</dbReference>
<dbReference type="PANTHER" id="PTHR14094">
    <property type="entry name" value="SIGNAL RECOGNITION PARTICLE 72"/>
    <property type="match status" value="1"/>
</dbReference>
<dbReference type="PANTHER" id="PTHR14094:SF9">
    <property type="entry name" value="SIGNAL RECOGNITION PARTICLE SUBUNIT SRP72"/>
    <property type="match status" value="1"/>
</dbReference>
<dbReference type="Pfam" id="PF08492">
    <property type="entry name" value="SRP72"/>
    <property type="match status" value="1"/>
</dbReference>
<dbReference type="SUPFAM" id="SSF48452">
    <property type="entry name" value="TPR-like"/>
    <property type="match status" value="1"/>
</dbReference>
<comment type="function">
    <text evidence="1 2">Component of the signal recognition particle (SRP) complex, a ribonucleoprotein complex that mediates the cotranslational targeting of secretory and membrane proteins to the endoplasmic reticulum (ER) (By similarity). The SRP complex interacts with the signal sequence in nascent secretory and membrane proteins and directs them to the membrane of the ER (By similarity). The SRP complex targets the ribosome-nascent chain complex to the SRP receptor (SR), which is anchored in the ER, where SR compaction and GTPase rearrangement drive cotranslational protein translocation into the ER (By similarity). Binds the signal recognition particle RNA (7SL RNA) in presence of srp68 (By similarity). Can bind 7SL RNA with low affinity (By similarity). The SRP complex possibly participates in the elongation arrest function (By similarity).</text>
</comment>
<comment type="subunit">
    <text evidence="1">Component of a fungal signal recognition particle (SRP) complex that consists of a 7SL RNA molecule (scR1) and at least six protein subunits: srp72, srp68, srp54, sec65, srp21 and srp14.</text>
</comment>
<comment type="subcellular location">
    <subcellularLocation>
        <location evidence="1">Cytoplasm</location>
    </subcellularLocation>
    <subcellularLocation>
        <location evidence="2">Endoplasmic reticulum membrane</location>
    </subcellularLocation>
    <subcellularLocation>
        <location evidence="2">Nucleus</location>
        <location evidence="2">Nucleolus</location>
    </subcellularLocation>
</comment>
<comment type="similarity">
    <text evidence="4">Belongs to the SRP72 family.</text>
</comment>
<accession>O59787</accession>
<feature type="chain" id="PRO_0000135237" description="Signal recognition particle subunit srp72">
    <location>
        <begin position="1"/>
        <end position="561"/>
    </location>
</feature>
<feature type="region of interest" description="Disordered" evidence="3">
    <location>
        <begin position="505"/>
        <end position="561"/>
    </location>
</feature>
<feature type="compositionally biased region" description="Basic residues" evidence="3">
    <location>
        <begin position="514"/>
        <end position="523"/>
    </location>
</feature>
<evidence type="ECO:0000250" key="1">
    <source>
        <dbReference type="UniProtKB" id="O76094"/>
    </source>
</evidence>
<evidence type="ECO:0000250" key="2">
    <source>
        <dbReference type="UniProtKB" id="P38688"/>
    </source>
</evidence>
<evidence type="ECO:0000256" key="3">
    <source>
        <dbReference type="SAM" id="MobiDB-lite"/>
    </source>
</evidence>
<evidence type="ECO:0000305" key="4"/>
<gene>
    <name type="primary">srp72</name>
    <name type="ORF">SPCC320.10</name>
</gene>
<protein>
    <recommendedName>
        <fullName>Signal recognition particle subunit srp72</fullName>
    </recommendedName>
    <alternativeName>
        <fullName>Signal recognition particle 72 kDa protein homolog</fullName>
    </alternativeName>
</protein>
<sequence>MSNHEEEIEELAQRIGKIEVGDTKSDIYQKVLNLIDIERYEHALKIIEKYLGETDAVYERAYCAFQLGKEDFSLEDKQFLQHLQAQKAYRLSDFSKALKIYEHLENDLPEQRADIRVNMLAAASQLPGLQLNNAVSLDDQDSVFNLATRYLTIGDWNQAIELLSSSLEKLENSDSNSEDHKSQINLCRLQLFFAYLQAGDNEKASKESLKISKDCLDETSQAIFVNNLISMSIDNPYISFRDLHGTNLEKALSSLLASQKKQFIRNLALLDMAVGKQRSVRKEKKRNPEESIYFSTILLREETKSLISPKKLPGYLENLFKSDSDNIVVALLLMQHKISNGNFRGALSIYQKLRTSLEASQSLSVLYSPGLVGLGDALHYKIQSTGFKSQLLHEAANYWRKQQSCEAKLLLCTRSLLAHLDERAPVSTIQDDMSVIDDLLQWKGPISELVSCKVAALCYLDKEIESGMDKYLVPTKDLITGIDVDDIEIRGVPVSAAIGPIKRSVEANSSNSSKKTRKRRKPTPKSFNPKATPDPQRWIPKRDRTNVKIKSKGKSMQGGVA</sequence>
<keyword id="KW-0963">Cytoplasm</keyword>
<keyword id="KW-0256">Endoplasmic reticulum</keyword>
<keyword id="KW-0472">Membrane</keyword>
<keyword id="KW-0539">Nucleus</keyword>
<keyword id="KW-1185">Reference proteome</keyword>
<keyword id="KW-0687">Ribonucleoprotein</keyword>
<keyword id="KW-0733">Signal recognition particle</keyword>
<name>SRP72_SCHPO</name>